<organism>
    <name type="scientific">Salmonella paratyphi C (strain RKS4594)</name>
    <dbReference type="NCBI Taxonomy" id="476213"/>
    <lineage>
        <taxon>Bacteria</taxon>
        <taxon>Pseudomonadati</taxon>
        <taxon>Pseudomonadota</taxon>
        <taxon>Gammaproteobacteria</taxon>
        <taxon>Enterobacterales</taxon>
        <taxon>Enterobacteriaceae</taxon>
        <taxon>Salmonella</taxon>
    </lineage>
</organism>
<name>DNLJ_SALPC</name>
<sequence>MEPIEQQLTELRTTLRHHEYLYHVMDAPEIPDAEYDRLMRELRELEAQRPDLITPDSPTQRVGAAPLTAFNQIRHEVPMLSLDNVFDEESFLAFNKRVQDRLKSTENVIWCCELKLDGLAVSILYENGVLVSAATRGDGTTGEDITSNVRTIRAIPLKLHGDNIPARLEVRGEVFLPQAGFEKINEDARRTGGKVFANPRNAAAGSLRQLDPRITAKRPLTFFCYGVGILEGGELPDTHLGRLLQFKAWGLPVSDRVTLCDSPQAVLDFYRNVEKDRPTLGFDIDGVVIKVNSLALQEQLGFVARAPRWAVAFKFPAQEQMTFVRDVEFQVGRTGAITPVARLEPVQVAGVLVSNATLHNADEIERLGLRIGDKVVIRRAGDVIPQVVNVVLSERPEETRPIVFPTHCPVCGSDVERVEGEAVTRCTGGLICGAQRKESLKHFVSRRAMDVDGMGDKIIDQLVEREYVHTPADLFRLTAGKLTGLDRMGPKSAQNVVNALEKAKATTFARFLYALGIREVGEATAAGLAAYFGTLEALQAATIDELQKVPDVGIVVATHVFNFFAEESNRDVIVQLLAEGVHWPAPVVINVQEIDSPFAGKTVVLTGSLSQMSRDDAKARLVALGAKVAGSVSKKTDLVIAGEAAGSKLAKAQELGITVIDEAEMIRLLGA</sequence>
<gene>
    <name evidence="1" type="primary">ligA</name>
    <name type="ordered locus">SPC_1233</name>
</gene>
<keyword id="KW-0227">DNA damage</keyword>
<keyword id="KW-0234">DNA repair</keyword>
<keyword id="KW-0235">DNA replication</keyword>
<keyword id="KW-0436">Ligase</keyword>
<keyword id="KW-0460">Magnesium</keyword>
<keyword id="KW-0464">Manganese</keyword>
<keyword id="KW-0479">Metal-binding</keyword>
<keyword id="KW-0520">NAD</keyword>
<keyword id="KW-0862">Zinc</keyword>
<accession>C0PZB4</accession>
<protein>
    <recommendedName>
        <fullName evidence="1">DNA ligase</fullName>
        <ecNumber evidence="1">6.5.1.2</ecNumber>
    </recommendedName>
    <alternativeName>
        <fullName evidence="1">Polydeoxyribonucleotide synthase [NAD(+)]</fullName>
    </alternativeName>
</protein>
<feature type="chain" id="PRO_0000380466" description="DNA ligase">
    <location>
        <begin position="1"/>
        <end position="671"/>
    </location>
</feature>
<feature type="domain" description="BRCT" evidence="1">
    <location>
        <begin position="593"/>
        <end position="671"/>
    </location>
</feature>
<feature type="active site" description="N6-AMP-lysine intermediate" evidence="1">
    <location>
        <position position="115"/>
    </location>
</feature>
<feature type="binding site" evidence="1">
    <location>
        <begin position="32"/>
        <end position="36"/>
    </location>
    <ligand>
        <name>NAD(+)</name>
        <dbReference type="ChEBI" id="CHEBI:57540"/>
    </ligand>
</feature>
<feature type="binding site" evidence="1">
    <location>
        <begin position="81"/>
        <end position="82"/>
    </location>
    <ligand>
        <name>NAD(+)</name>
        <dbReference type="ChEBI" id="CHEBI:57540"/>
    </ligand>
</feature>
<feature type="binding site" evidence="1">
    <location>
        <position position="113"/>
    </location>
    <ligand>
        <name>NAD(+)</name>
        <dbReference type="ChEBI" id="CHEBI:57540"/>
    </ligand>
</feature>
<feature type="binding site" evidence="1">
    <location>
        <position position="136"/>
    </location>
    <ligand>
        <name>NAD(+)</name>
        <dbReference type="ChEBI" id="CHEBI:57540"/>
    </ligand>
</feature>
<feature type="binding site" evidence="1">
    <location>
        <position position="173"/>
    </location>
    <ligand>
        <name>NAD(+)</name>
        <dbReference type="ChEBI" id="CHEBI:57540"/>
    </ligand>
</feature>
<feature type="binding site" evidence="1">
    <location>
        <position position="290"/>
    </location>
    <ligand>
        <name>NAD(+)</name>
        <dbReference type="ChEBI" id="CHEBI:57540"/>
    </ligand>
</feature>
<feature type="binding site" evidence="1">
    <location>
        <position position="314"/>
    </location>
    <ligand>
        <name>NAD(+)</name>
        <dbReference type="ChEBI" id="CHEBI:57540"/>
    </ligand>
</feature>
<feature type="binding site" evidence="1">
    <location>
        <position position="408"/>
    </location>
    <ligand>
        <name>Zn(2+)</name>
        <dbReference type="ChEBI" id="CHEBI:29105"/>
    </ligand>
</feature>
<feature type="binding site" evidence="1">
    <location>
        <position position="411"/>
    </location>
    <ligand>
        <name>Zn(2+)</name>
        <dbReference type="ChEBI" id="CHEBI:29105"/>
    </ligand>
</feature>
<feature type="binding site" evidence="1">
    <location>
        <position position="426"/>
    </location>
    <ligand>
        <name>Zn(2+)</name>
        <dbReference type="ChEBI" id="CHEBI:29105"/>
    </ligand>
</feature>
<feature type="binding site" evidence="1">
    <location>
        <position position="432"/>
    </location>
    <ligand>
        <name>Zn(2+)</name>
        <dbReference type="ChEBI" id="CHEBI:29105"/>
    </ligand>
</feature>
<proteinExistence type="inferred from homology"/>
<comment type="function">
    <text evidence="1">DNA ligase that catalyzes the formation of phosphodiester linkages between 5'-phosphoryl and 3'-hydroxyl groups in double-stranded DNA using NAD as a coenzyme and as the energy source for the reaction. It is essential for DNA replication and repair of damaged DNA.</text>
</comment>
<comment type="catalytic activity">
    <reaction evidence="1">
        <text>NAD(+) + (deoxyribonucleotide)n-3'-hydroxyl + 5'-phospho-(deoxyribonucleotide)m = (deoxyribonucleotide)n+m + AMP + beta-nicotinamide D-nucleotide.</text>
        <dbReference type="EC" id="6.5.1.2"/>
    </reaction>
</comment>
<comment type="cofactor">
    <cofactor evidence="1">
        <name>Mg(2+)</name>
        <dbReference type="ChEBI" id="CHEBI:18420"/>
    </cofactor>
    <cofactor evidence="1">
        <name>Mn(2+)</name>
        <dbReference type="ChEBI" id="CHEBI:29035"/>
    </cofactor>
</comment>
<comment type="similarity">
    <text evidence="1">Belongs to the NAD-dependent DNA ligase family. LigA subfamily.</text>
</comment>
<evidence type="ECO:0000255" key="1">
    <source>
        <dbReference type="HAMAP-Rule" id="MF_01588"/>
    </source>
</evidence>
<dbReference type="EC" id="6.5.1.2" evidence="1"/>
<dbReference type="EMBL" id="CP000857">
    <property type="protein sequence ID" value="ACN45397.1"/>
    <property type="molecule type" value="Genomic_DNA"/>
</dbReference>
<dbReference type="RefSeq" id="WP_000433284.1">
    <property type="nucleotide sequence ID" value="NC_012125.1"/>
</dbReference>
<dbReference type="SMR" id="C0PZB4"/>
<dbReference type="KEGG" id="sei:SPC_1233"/>
<dbReference type="HOGENOM" id="CLU_007764_2_1_6"/>
<dbReference type="Proteomes" id="UP000001599">
    <property type="component" value="Chromosome"/>
</dbReference>
<dbReference type="GO" id="GO:0005829">
    <property type="term" value="C:cytosol"/>
    <property type="evidence" value="ECO:0007669"/>
    <property type="project" value="TreeGrafter"/>
</dbReference>
<dbReference type="GO" id="GO:0003677">
    <property type="term" value="F:DNA binding"/>
    <property type="evidence" value="ECO:0007669"/>
    <property type="project" value="InterPro"/>
</dbReference>
<dbReference type="GO" id="GO:0003911">
    <property type="term" value="F:DNA ligase (NAD+) activity"/>
    <property type="evidence" value="ECO:0007669"/>
    <property type="project" value="UniProtKB-UniRule"/>
</dbReference>
<dbReference type="GO" id="GO:0046872">
    <property type="term" value="F:metal ion binding"/>
    <property type="evidence" value="ECO:0007669"/>
    <property type="project" value="UniProtKB-KW"/>
</dbReference>
<dbReference type="GO" id="GO:0006281">
    <property type="term" value="P:DNA repair"/>
    <property type="evidence" value="ECO:0007669"/>
    <property type="project" value="UniProtKB-KW"/>
</dbReference>
<dbReference type="GO" id="GO:0006260">
    <property type="term" value="P:DNA replication"/>
    <property type="evidence" value="ECO:0007669"/>
    <property type="project" value="UniProtKB-KW"/>
</dbReference>
<dbReference type="CDD" id="cd17748">
    <property type="entry name" value="BRCT_DNA_ligase_like"/>
    <property type="match status" value="1"/>
</dbReference>
<dbReference type="CDD" id="cd00114">
    <property type="entry name" value="LIGANc"/>
    <property type="match status" value="1"/>
</dbReference>
<dbReference type="FunFam" id="1.10.150.20:FF:000006">
    <property type="entry name" value="DNA ligase"/>
    <property type="match status" value="1"/>
</dbReference>
<dbReference type="FunFam" id="1.10.150.20:FF:000007">
    <property type="entry name" value="DNA ligase"/>
    <property type="match status" value="1"/>
</dbReference>
<dbReference type="FunFam" id="1.10.287.610:FF:000002">
    <property type="entry name" value="DNA ligase"/>
    <property type="match status" value="1"/>
</dbReference>
<dbReference type="FunFam" id="2.40.50.140:FF:000012">
    <property type="entry name" value="DNA ligase"/>
    <property type="match status" value="1"/>
</dbReference>
<dbReference type="FunFam" id="3.30.470.30:FF:000001">
    <property type="entry name" value="DNA ligase"/>
    <property type="match status" value="1"/>
</dbReference>
<dbReference type="FunFam" id="3.40.50.10190:FF:000004">
    <property type="entry name" value="DNA ligase"/>
    <property type="match status" value="1"/>
</dbReference>
<dbReference type="FunFam" id="6.20.10.30:FF:000001">
    <property type="entry name" value="DNA ligase"/>
    <property type="match status" value="1"/>
</dbReference>
<dbReference type="Gene3D" id="6.20.10.30">
    <property type="match status" value="1"/>
</dbReference>
<dbReference type="Gene3D" id="1.10.150.20">
    <property type="entry name" value="5' to 3' exonuclease, C-terminal subdomain"/>
    <property type="match status" value="2"/>
</dbReference>
<dbReference type="Gene3D" id="3.40.50.10190">
    <property type="entry name" value="BRCT domain"/>
    <property type="match status" value="1"/>
</dbReference>
<dbReference type="Gene3D" id="3.30.470.30">
    <property type="entry name" value="DNA ligase/mRNA capping enzyme"/>
    <property type="match status" value="1"/>
</dbReference>
<dbReference type="Gene3D" id="1.10.287.610">
    <property type="entry name" value="Helix hairpin bin"/>
    <property type="match status" value="1"/>
</dbReference>
<dbReference type="Gene3D" id="2.40.50.140">
    <property type="entry name" value="Nucleic acid-binding proteins"/>
    <property type="match status" value="1"/>
</dbReference>
<dbReference type="HAMAP" id="MF_01588">
    <property type="entry name" value="DNA_ligase_A"/>
    <property type="match status" value="1"/>
</dbReference>
<dbReference type="InterPro" id="IPR001357">
    <property type="entry name" value="BRCT_dom"/>
</dbReference>
<dbReference type="InterPro" id="IPR036420">
    <property type="entry name" value="BRCT_dom_sf"/>
</dbReference>
<dbReference type="InterPro" id="IPR041663">
    <property type="entry name" value="DisA/LigA_HHH"/>
</dbReference>
<dbReference type="InterPro" id="IPR001679">
    <property type="entry name" value="DNA_ligase"/>
</dbReference>
<dbReference type="InterPro" id="IPR018239">
    <property type="entry name" value="DNA_ligase_AS"/>
</dbReference>
<dbReference type="InterPro" id="IPR033136">
    <property type="entry name" value="DNA_ligase_CS"/>
</dbReference>
<dbReference type="InterPro" id="IPR013839">
    <property type="entry name" value="DNAligase_adenylation"/>
</dbReference>
<dbReference type="InterPro" id="IPR013840">
    <property type="entry name" value="DNAligase_N"/>
</dbReference>
<dbReference type="InterPro" id="IPR003583">
    <property type="entry name" value="Hlx-hairpin-Hlx_DNA-bd_motif"/>
</dbReference>
<dbReference type="InterPro" id="IPR012340">
    <property type="entry name" value="NA-bd_OB-fold"/>
</dbReference>
<dbReference type="InterPro" id="IPR004150">
    <property type="entry name" value="NAD_DNA_ligase_OB"/>
</dbReference>
<dbReference type="InterPro" id="IPR010994">
    <property type="entry name" value="RuvA_2-like"/>
</dbReference>
<dbReference type="InterPro" id="IPR004149">
    <property type="entry name" value="Znf_DNAligase_C4"/>
</dbReference>
<dbReference type="NCBIfam" id="TIGR00575">
    <property type="entry name" value="dnlj"/>
    <property type="match status" value="1"/>
</dbReference>
<dbReference type="NCBIfam" id="NF005932">
    <property type="entry name" value="PRK07956.1"/>
    <property type="match status" value="1"/>
</dbReference>
<dbReference type="PANTHER" id="PTHR23389">
    <property type="entry name" value="CHROMOSOME TRANSMISSION FIDELITY FACTOR 18"/>
    <property type="match status" value="1"/>
</dbReference>
<dbReference type="PANTHER" id="PTHR23389:SF9">
    <property type="entry name" value="DNA LIGASE"/>
    <property type="match status" value="1"/>
</dbReference>
<dbReference type="Pfam" id="PF00533">
    <property type="entry name" value="BRCT"/>
    <property type="match status" value="1"/>
</dbReference>
<dbReference type="Pfam" id="PF01653">
    <property type="entry name" value="DNA_ligase_aden"/>
    <property type="match status" value="1"/>
</dbReference>
<dbReference type="Pfam" id="PF03120">
    <property type="entry name" value="DNA_ligase_OB"/>
    <property type="match status" value="1"/>
</dbReference>
<dbReference type="Pfam" id="PF03119">
    <property type="entry name" value="DNA_ligase_ZBD"/>
    <property type="match status" value="1"/>
</dbReference>
<dbReference type="Pfam" id="PF12826">
    <property type="entry name" value="HHH_2"/>
    <property type="match status" value="1"/>
</dbReference>
<dbReference type="Pfam" id="PF14520">
    <property type="entry name" value="HHH_5"/>
    <property type="match status" value="1"/>
</dbReference>
<dbReference type="Pfam" id="PF22745">
    <property type="entry name" value="Nlig-Ia"/>
    <property type="match status" value="1"/>
</dbReference>
<dbReference type="PIRSF" id="PIRSF001604">
    <property type="entry name" value="LigA"/>
    <property type="match status" value="1"/>
</dbReference>
<dbReference type="SMART" id="SM00292">
    <property type="entry name" value="BRCT"/>
    <property type="match status" value="1"/>
</dbReference>
<dbReference type="SMART" id="SM00278">
    <property type="entry name" value="HhH1"/>
    <property type="match status" value="4"/>
</dbReference>
<dbReference type="SMART" id="SM00532">
    <property type="entry name" value="LIGANc"/>
    <property type="match status" value="1"/>
</dbReference>
<dbReference type="SUPFAM" id="SSF52113">
    <property type="entry name" value="BRCT domain"/>
    <property type="match status" value="1"/>
</dbReference>
<dbReference type="SUPFAM" id="SSF56091">
    <property type="entry name" value="DNA ligase/mRNA capping enzyme, catalytic domain"/>
    <property type="match status" value="1"/>
</dbReference>
<dbReference type="SUPFAM" id="SSF50249">
    <property type="entry name" value="Nucleic acid-binding proteins"/>
    <property type="match status" value="1"/>
</dbReference>
<dbReference type="SUPFAM" id="SSF47781">
    <property type="entry name" value="RuvA domain 2-like"/>
    <property type="match status" value="1"/>
</dbReference>
<dbReference type="PROSITE" id="PS50172">
    <property type="entry name" value="BRCT"/>
    <property type="match status" value="1"/>
</dbReference>
<dbReference type="PROSITE" id="PS01055">
    <property type="entry name" value="DNA_LIGASE_N1"/>
    <property type="match status" value="1"/>
</dbReference>
<dbReference type="PROSITE" id="PS01056">
    <property type="entry name" value="DNA_LIGASE_N2"/>
    <property type="match status" value="1"/>
</dbReference>
<reference key="1">
    <citation type="journal article" date="2009" name="PLoS ONE">
        <title>Salmonella paratyphi C: genetic divergence from Salmonella choleraesuis and pathogenic convergence with Salmonella typhi.</title>
        <authorList>
            <person name="Liu W.-Q."/>
            <person name="Feng Y."/>
            <person name="Wang Y."/>
            <person name="Zou Q.-H."/>
            <person name="Chen F."/>
            <person name="Guo J.-T."/>
            <person name="Peng Y.-H."/>
            <person name="Jin Y."/>
            <person name="Li Y.-G."/>
            <person name="Hu S.-N."/>
            <person name="Johnston R.N."/>
            <person name="Liu G.-R."/>
            <person name="Liu S.-L."/>
        </authorList>
    </citation>
    <scope>NUCLEOTIDE SEQUENCE [LARGE SCALE GENOMIC DNA]</scope>
    <source>
        <strain>RKS4594</strain>
    </source>
</reference>